<evidence type="ECO:0000255" key="1">
    <source>
        <dbReference type="HAMAP-Rule" id="MF_00984"/>
    </source>
</evidence>
<proteinExistence type="inferred from homology"/>
<protein>
    <recommendedName>
        <fullName evidence="1">Single-stranded DNA-binding protein</fullName>
        <shortName evidence="1">SSB</shortName>
    </recommendedName>
</protein>
<gene>
    <name type="primary">ssb1</name>
</gene>
<reference key="1">
    <citation type="submission" date="2001-08" db="EMBL/GenBank/DDBJ databases">
        <title>Identification of a temperature-regulated DNA-binding protein in the cyanobacterium Anabaena variabilis strain M3.</title>
        <authorList>
            <person name="Maruyama K."/>
            <person name="Ehira S."/>
            <person name="Sato N."/>
        </authorList>
    </citation>
    <scope>NUCLEOTIDE SEQUENCE [GENOMIC DNA]</scope>
    <source>
        <strain>M3</strain>
    </source>
</reference>
<organism>
    <name type="scientific">Anabaena variabilis</name>
    <dbReference type="NCBI Taxonomy" id="264691"/>
    <lineage>
        <taxon>Bacteria</taxon>
        <taxon>Bacillati</taxon>
        <taxon>Cyanobacteriota</taxon>
        <taxon>Cyanophyceae</taxon>
        <taxon>Nostocales</taxon>
        <taxon>Nostocaceae</taxon>
        <taxon>Trichormus</taxon>
    </lineage>
</organism>
<dbReference type="EMBL" id="AB070900">
    <property type="protein sequence ID" value="BAB85642.1"/>
    <property type="molecule type" value="Genomic_DNA"/>
</dbReference>
<dbReference type="SMR" id="P0A4K1"/>
<dbReference type="GO" id="GO:0009295">
    <property type="term" value="C:nucleoid"/>
    <property type="evidence" value="ECO:0007669"/>
    <property type="project" value="TreeGrafter"/>
</dbReference>
<dbReference type="GO" id="GO:0003697">
    <property type="term" value="F:single-stranded DNA binding"/>
    <property type="evidence" value="ECO:0007669"/>
    <property type="project" value="UniProtKB-UniRule"/>
</dbReference>
<dbReference type="GO" id="GO:0006260">
    <property type="term" value="P:DNA replication"/>
    <property type="evidence" value="ECO:0007669"/>
    <property type="project" value="InterPro"/>
</dbReference>
<dbReference type="CDD" id="cd04496">
    <property type="entry name" value="SSB_OBF"/>
    <property type="match status" value="1"/>
</dbReference>
<dbReference type="Gene3D" id="2.40.50.140">
    <property type="entry name" value="Nucleic acid-binding proteins"/>
    <property type="match status" value="1"/>
</dbReference>
<dbReference type="HAMAP" id="MF_00984">
    <property type="entry name" value="SSB"/>
    <property type="match status" value="1"/>
</dbReference>
<dbReference type="InterPro" id="IPR012340">
    <property type="entry name" value="NA-bd_OB-fold"/>
</dbReference>
<dbReference type="InterPro" id="IPR000424">
    <property type="entry name" value="Primosome_PriB/ssb"/>
</dbReference>
<dbReference type="InterPro" id="IPR011344">
    <property type="entry name" value="ssDNA-bd"/>
</dbReference>
<dbReference type="NCBIfam" id="NF005674">
    <property type="entry name" value="PRK07459.1"/>
    <property type="match status" value="1"/>
</dbReference>
<dbReference type="NCBIfam" id="TIGR00621">
    <property type="entry name" value="ssb"/>
    <property type="match status" value="1"/>
</dbReference>
<dbReference type="PANTHER" id="PTHR10302">
    <property type="entry name" value="SINGLE-STRANDED DNA-BINDING PROTEIN"/>
    <property type="match status" value="1"/>
</dbReference>
<dbReference type="PANTHER" id="PTHR10302:SF0">
    <property type="entry name" value="SINGLE-STRANDED DNA-BINDING PROTEIN, MITOCHONDRIAL"/>
    <property type="match status" value="1"/>
</dbReference>
<dbReference type="Pfam" id="PF00436">
    <property type="entry name" value="SSB"/>
    <property type="match status" value="1"/>
</dbReference>
<dbReference type="PIRSF" id="PIRSF002070">
    <property type="entry name" value="SSB"/>
    <property type="match status" value="1"/>
</dbReference>
<dbReference type="SUPFAM" id="SSF50249">
    <property type="entry name" value="Nucleic acid-binding proteins"/>
    <property type="match status" value="1"/>
</dbReference>
<dbReference type="PROSITE" id="PS50935">
    <property type="entry name" value="SSB"/>
    <property type="match status" value="1"/>
</dbReference>
<feature type="chain" id="PRO_0000095997" description="Single-stranded DNA-binding protein">
    <location>
        <begin position="1"/>
        <end position="119"/>
    </location>
</feature>
<feature type="domain" description="SSB" evidence="1">
    <location>
        <begin position="3"/>
        <end position="102"/>
    </location>
</feature>
<sequence>MSINIVTLVGRVGTDPDIKYFESGSVKCRLTLAVNRRSKNDKPDWFTLELWDKTAEVAGNYVRKGSLIGVKGSLKFDSWSDRQTGVNRSTPVIRVDQLELLGSKQDRDGGSSDFAPENF</sequence>
<name>SSB_ANAVA</name>
<keyword id="KW-0238">DNA-binding</keyword>
<comment type="subunit">
    <text evidence="1">Homotetramer.</text>
</comment>
<accession>P0A4K1</accession>
<accession>Q8Z0K3</accession>